<evidence type="ECO:0000269" key="1">
    <source>
    </source>
</evidence>
<evidence type="ECO:0000269" key="2">
    <source>
    </source>
</evidence>
<evidence type="ECO:0000269" key="3">
    <source>
    </source>
</evidence>
<comment type="function">
    <text evidence="1 2 3">Plays a role in the inactivation of several host DNA restriction systems including EcoprrI or EcoR124I. As a consequence, it activates the host anticodon nuclease PrrC. However, the phage-encoded RNA repair enzymes normally offset the damage.</text>
</comment>
<comment type="domain">
    <text evidence="3">The conserved N-proximal 18 residue region of Stp is critical both for its anti-DNA restriction and ACNase activating functions.</text>
</comment>
<keyword id="KW-0945">Host-virus interaction</keyword>
<keyword id="KW-1090">Inhibition of host innate immune response by virus</keyword>
<keyword id="KW-1185">Reference proteome</keyword>
<keyword id="KW-1258">Restriction-modification system evasion by virus</keyword>
<keyword id="KW-0899">Viral immunoevasion</keyword>
<feature type="peptide" id="PRO_0000164985" description="T4 Suppressor of prr">
    <location>
        <begin position="1"/>
        <end position="26"/>
    </location>
</feature>
<accession>P62765</accession>
<accession>P18788</accession>
<name>STP_BPT4</name>
<protein>
    <recommendedName>
        <fullName>T4 Suppressor of prr</fullName>
        <shortName>Stp</shortName>
    </recommendedName>
</protein>
<dbReference type="EMBL" id="Z46884">
    <property type="protein sequence ID" value="CAA86982.1"/>
    <property type="molecule type" value="Genomic_DNA"/>
</dbReference>
<dbReference type="EMBL" id="Z46874">
    <property type="protein sequence ID" value="CAA86954.1"/>
    <property type="molecule type" value="Genomic_DNA"/>
</dbReference>
<dbReference type="EMBL" id="AF158101">
    <property type="protein sequence ID" value="AAD42660.1"/>
    <property type="molecule type" value="Genomic_DNA"/>
</dbReference>
<dbReference type="PIR" id="S55796">
    <property type="entry name" value="STBPT4"/>
</dbReference>
<dbReference type="RefSeq" id="NP_049878.1">
    <property type="nucleotide sequence ID" value="NC_000866.4"/>
</dbReference>
<dbReference type="GeneID" id="1258673"/>
<dbReference type="KEGG" id="vg:1258673"/>
<dbReference type="Proteomes" id="UP000009087">
    <property type="component" value="Segment"/>
</dbReference>
<dbReference type="GO" id="GO:0004518">
    <property type="term" value="F:nuclease activity"/>
    <property type="evidence" value="ECO:0007669"/>
    <property type="project" value="InterPro"/>
</dbReference>
<dbReference type="GO" id="GO:0050792">
    <property type="term" value="P:regulation of viral process"/>
    <property type="evidence" value="ECO:0007669"/>
    <property type="project" value="InterPro"/>
</dbReference>
<dbReference type="GO" id="GO:0099018">
    <property type="term" value="P:symbiont-mediated evasion of host restriction-modification system"/>
    <property type="evidence" value="ECO:0007669"/>
    <property type="project" value="UniProtKB-KW"/>
</dbReference>
<dbReference type="GO" id="GO:0052170">
    <property type="term" value="P:symbiont-mediated suppression of host innate immune response"/>
    <property type="evidence" value="ECO:0007669"/>
    <property type="project" value="UniProtKB-KW"/>
</dbReference>
<dbReference type="InterPro" id="IPR012585">
    <property type="entry name" value="Stp"/>
</dbReference>
<dbReference type="Pfam" id="PF08133">
    <property type="entry name" value="Nuclease_act"/>
    <property type="match status" value="1"/>
</dbReference>
<gene>
    <name type="primary">stp</name>
</gene>
<organism>
    <name type="scientific">Enterobacteria phage T4</name>
    <name type="common">Bacteriophage T4</name>
    <dbReference type="NCBI Taxonomy" id="10665"/>
    <lineage>
        <taxon>Viruses</taxon>
        <taxon>Duplodnaviria</taxon>
        <taxon>Heunggongvirae</taxon>
        <taxon>Uroviricota</taxon>
        <taxon>Caudoviricetes</taxon>
        <taxon>Straboviridae</taxon>
        <taxon>Tevenvirinae</taxon>
        <taxon>Tequatrovirus</taxon>
    </lineage>
</organism>
<organismHost>
    <name type="scientific">Escherichia coli</name>
    <dbReference type="NCBI Taxonomy" id="562"/>
</organismHost>
<proteinExistence type="predicted"/>
<reference key="1">
    <citation type="journal article" date="1988" name="J. Mol. Biol.">
        <title>Nucleotide and deduced amino acid sequence of stp: the bacteriophage T4 anticodon nuclease gene.</title>
        <authorList>
            <person name="Chapman D."/>
            <person name="Morad I."/>
            <person name="Kaufmann G."/>
            <person name="Gait M.J."/>
            <person name="Jorissen L."/>
            <person name="Snyder L."/>
        </authorList>
    </citation>
    <scope>NUCLEOTIDE SEQUENCE [GENOMIC DNA]</scope>
</reference>
<reference key="2">
    <citation type="unpublished observations" date="1994-12">
        <authorList>
            <person name="Kaufmann G."/>
        </authorList>
    </citation>
    <scope>SEQUENCE REVISION</scope>
</reference>
<reference key="3">
    <citation type="journal article" date="1995" name="J. Mol. Biol.">
        <title>Phage T4-coded Stp: double-edged effector of coupled DNA and tRNA-restriction systems.</title>
        <authorList>
            <person name="Penner M."/>
            <person name="Morad I."/>
            <person name="Snyder L."/>
            <person name="Kaufmann G."/>
        </authorList>
    </citation>
    <scope>NUCLEOTIDE SEQUENCE [GENOMIC DNA]</scope>
    <scope>FUNCTION</scope>
    <scope>DOMAIN</scope>
</reference>
<reference key="4">
    <citation type="journal article" date="2003" name="Microbiol. Mol. Biol. Rev.">
        <title>Bacteriophage T4 genome.</title>
        <authorList>
            <person name="Miller E.S."/>
            <person name="Kutter E."/>
            <person name="Mosig G."/>
            <person name="Arisaka F."/>
            <person name="Kunisawa T."/>
            <person name="Ruger W."/>
        </authorList>
    </citation>
    <scope>NUCLEOTIDE SEQUENCE [LARGE SCALE GENOMIC DNA]</scope>
</reference>
<reference key="5">
    <citation type="journal article" date="1992" name="EMBO J.">
        <title>HSD restriction-modification proteins partake in latent anticodon nuclease.</title>
        <authorList>
            <person name="Amitsur M."/>
            <person name="Morad I."/>
            <person name="Chapman-Shimshoni D."/>
            <person name="Kaufmann G."/>
        </authorList>
    </citation>
    <scope>FUNCTION</scope>
    <scope>SYNTHESIS OF ORIGINAL SEQUENCE</scope>
</reference>
<reference key="6">
    <citation type="journal article" date="2003" name="Mol. Microbiol.">
        <title>Bacteriophage T4-encoded Stp can be replaced as activator of anticodon nuclease by a normal host cell metabolite.</title>
        <authorList>
            <person name="Amitsur M."/>
            <person name="Benjamin S."/>
            <person name="Rosner R."/>
            <person name="Chapman-Shimshoni D."/>
            <person name="Meidler R."/>
            <person name="Blanga S."/>
            <person name="Kaufmann G."/>
        </authorList>
    </citation>
    <scope>FUNCTION</scope>
</reference>
<sequence length="26" mass="3184">MSNFHNEHVMQFYRNNLKTKGVFGRQ</sequence>